<dbReference type="EMBL" id="AB004068">
    <property type="protein sequence ID" value="BAA20284.1"/>
    <property type="molecule type" value="Genomic_DNA"/>
</dbReference>
<dbReference type="RefSeq" id="WP_005381564.1">
    <property type="nucleotide sequence ID" value="NZ_VTYJ01000008.1"/>
</dbReference>
<dbReference type="PDB" id="8BRI">
    <property type="method" value="EM"/>
    <property type="resolution" value="3.90 A"/>
    <property type="chains" value="A/B/C/D/E=1-253"/>
</dbReference>
<dbReference type="PDB" id="8ZYV">
    <property type="method" value="EM"/>
    <property type="resolution" value="3.12 A"/>
    <property type="chains" value="C/D/E/F/G=1-253"/>
</dbReference>
<dbReference type="PDB" id="8ZYW">
    <property type="method" value="EM"/>
    <property type="resolution" value="3.43 A"/>
    <property type="chains" value="C/D/E/F/G=1-253"/>
</dbReference>
<dbReference type="PDB" id="8ZYZ">
    <property type="method" value="EM"/>
    <property type="resolution" value="3.16 A"/>
    <property type="chains" value="C/D/E/F/G=1-253"/>
</dbReference>
<dbReference type="PDB" id="8ZZ0">
    <property type="method" value="EM"/>
    <property type="resolution" value="3.43 A"/>
    <property type="chains" value="C/D/E/F/G=1-253"/>
</dbReference>
<dbReference type="PDB" id="9IJM">
    <property type="method" value="EM"/>
    <property type="resolution" value="3.32 A"/>
    <property type="chains" value="C/D/E/F/G=1-253"/>
</dbReference>
<dbReference type="PDBsum" id="8BRI"/>
<dbReference type="PDBsum" id="8ZYV"/>
<dbReference type="PDBsum" id="8ZYW"/>
<dbReference type="PDBsum" id="8ZYZ"/>
<dbReference type="PDBsum" id="8ZZ0"/>
<dbReference type="PDBsum" id="9IJM"/>
<dbReference type="EMDB" id="EMD-10832"/>
<dbReference type="EMDB" id="EMD-16212"/>
<dbReference type="EMDB" id="EMD-16214"/>
<dbReference type="EMDB" id="EMD-16215"/>
<dbReference type="EMDB" id="EMD-60580"/>
<dbReference type="EMDB" id="EMD-60581"/>
<dbReference type="EMDB" id="EMD-60584"/>
<dbReference type="EMDB" id="EMD-60585"/>
<dbReference type="EMDB" id="EMD-60636"/>
<dbReference type="SMR" id="O06873"/>
<dbReference type="IntAct" id="O06873">
    <property type="interactions" value="1"/>
</dbReference>
<dbReference type="STRING" id="663.BAU10_02475"/>
<dbReference type="TCDB" id="1.A.30.1.2">
    <property type="family name" value="the h(+)- or na(+)-translocating bacterial flagellar motor/exbbd outer membrane transport energizer (mot/exb) superfamily"/>
</dbReference>
<dbReference type="GeneID" id="75168580"/>
<dbReference type="eggNOG" id="COG1291">
    <property type="taxonomic scope" value="Bacteria"/>
</dbReference>
<dbReference type="OrthoDB" id="9806929at2"/>
<dbReference type="GO" id="GO:0005886">
    <property type="term" value="C:plasma membrane"/>
    <property type="evidence" value="ECO:0007669"/>
    <property type="project" value="UniProtKB-SubCell"/>
</dbReference>
<dbReference type="GO" id="GO:0071978">
    <property type="term" value="P:bacterial-type flagellum-dependent swarming motility"/>
    <property type="evidence" value="ECO:0007669"/>
    <property type="project" value="InterPro"/>
</dbReference>
<dbReference type="GO" id="GO:0006935">
    <property type="term" value="P:chemotaxis"/>
    <property type="evidence" value="ECO:0007669"/>
    <property type="project" value="UniProtKB-KW"/>
</dbReference>
<dbReference type="GO" id="GO:1902600">
    <property type="term" value="P:proton transmembrane transport"/>
    <property type="evidence" value="ECO:0007669"/>
    <property type="project" value="UniProtKB-KW"/>
</dbReference>
<dbReference type="InterPro" id="IPR000540">
    <property type="entry name" value="Flag_MotA_CS"/>
</dbReference>
<dbReference type="InterPro" id="IPR047055">
    <property type="entry name" value="MotA-like"/>
</dbReference>
<dbReference type="InterPro" id="IPR002898">
    <property type="entry name" value="MotA_ExbB_proton_chnl"/>
</dbReference>
<dbReference type="NCBIfam" id="NF006527">
    <property type="entry name" value="PRK08990.1"/>
    <property type="match status" value="1"/>
</dbReference>
<dbReference type="PANTHER" id="PTHR30433">
    <property type="entry name" value="CHEMOTAXIS PROTEIN MOTA"/>
    <property type="match status" value="1"/>
</dbReference>
<dbReference type="PANTHER" id="PTHR30433:SF2">
    <property type="entry name" value="MOTILITY PROTEIN A"/>
    <property type="match status" value="1"/>
</dbReference>
<dbReference type="Pfam" id="PF01618">
    <property type="entry name" value="MotA_ExbB"/>
    <property type="match status" value="1"/>
</dbReference>
<dbReference type="PROSITE" id="PS01307">
    <property type="entry name" value="MOTA"/>
    <property type="match status" value="1"/>
</dbReference>
<organism>
    <name type="scientific">Vibrio alginolyticus</name>
    <dbReference type="NCBI Taxonomy" id="663"/>
    <lineage>
        <taxon>Bacteria</taxon>
        <taxon>Pseudomonadati</taxon>
        <taxon>Pseudomonadota</taxon>
        <taxon>Gammaproteobacteria</taxon>
        <taxon>Vibrionales</taxon>
        <taxon>Vibrionaceae</taxon>
        <taxon>Vibrio</taxon>
    </lineage>
</organism>
<proteinExistence type="evidence at protein level"/>
<protein>
    <recommendedName>
        <fullName>Chemotaxis protein PomA</fullName>
    </recommendedName>
</protein>
<sequence>MDLATLLGLIGGFAFVIMAMVLGGSIGMFVDVTSILIVVGGSIFVVLMKFTMGQFFGATKIAGKAFMFKADEPEDLIAKIVEMADAARKGGFLALEEMEINNTFMQKGIDLLVDGHDADVVRAALKKDIALTDERHTQGTGVFRAFGDVAPAMGMIGTLVGLVAMLSNMDDPKAIGPAMAVALLTTLYGAILSNMVFFPIADKLSLRRDQETLNRRLIMDGVLAIQDGQNPRVIDSYLKNYLNEGKRALEIDE</sequence>
<name>POMA_VIBAL</name>
<gene>
    <name type="primary">pomA</name>
</gene>
<keyword id="KW-0002">3D-structure</keyword>
<keyword id="KW-0997">Cell inner membrane</keyword>
<keyword id="KW-1003">Cell membrane</keyword>
<keyword id="KW-0145">Chemotaxis</keyword>
<keyword id="KW-0283">Flagellar rotation</keyword>
<keyword id="KW-0375">Hydrogen ion transport</keyword>
<keyword id="KW-0406">Ion transport</keyword>
<keyword id="KW-0472">Membrane</keyword>
<keyword id="KW-0812">Transmembrane</keyword>
<keyword id="KW-1133">Transmembrane helix</keyword>
<keyword id="KW-0813">Transport</keyword>
<comment type="function">
    <text evidence="1">PomA and PomB comprise the stator element of the flagellar motor complex. Required for rotation of the flagellar motor. Probable transmembrane proton channel (By similarity).</text>
</comment>
<comment type="subunit">
    <text evidence="1">Each stator complex is composed of 4 PomA and 2 PomB subunits. 2 A subunits and 1 B subunit are thought to form a single ion channel, so that each stator complex contains two channels (By similarity).</text>
</comment>
<comment type="interaction">
    <interactant intactId="EBI-6402837">
        <id>O06873</id>
    </interactant>
    <interactant intactId="EBI-6402829">
        <id>O06874</id>
        <label>pomB</label>
    </interactant>
    <organismsDiffer>false</organismsDiffer>
    <experiments>3</experiments>
</comment>
<comment type="subcellular location">
    <subcellularLocation>
        <location evidence="1">Cell inner membrane</location>
        <topology evidence="3">Multi-pass membrane protein</topology>
    </subcellularLocation>
</comment>
<comment type="similarity">
    <text evidence="3">Belongs to the MotA family.</text>
</comment>
<evidence type="ECO:0000250" key="1"/>
<evidence type="ECO:0000255" key="2"/>
<evidence type="ECO:0000305" key="3"/>
<feature type="chain" id="PRO_0000189580" description="Chemotaxis protein PomA">
    <location>
        <begin position="1"/>
        <end position="253"/>
    </location>
</feature>
<feature type="transmembrane region" description="Helical" evidence="2">
    <location>
        <begin position="6"/>
        <end position="26"/>
    </location>
</feature>
<feature type="transmembrane region" description="Helical" evidence="2">
    <location>
        <begin position="28"/>
        <end position="48"/>
    </location>
</feature>
<feature type="transmembrane region" description="Helical" evidence="2">
    <location>
        <begin position="146"/>
        <end position="166"/>
    </location>
</feature>
<feature type="transmembrane region" description="Helical" evidence="2">
    <location>
        <begin position="180"/>
        <end position="200"/>
    </location>
</feature>
<feature type="topological domain" description="Cytoplasmic" evidence="2">
    <location>
        <begin position="201"/>
        <end position="253"/>
    </location>
</feature>
<reference key="1">
    <citation type="journal article" date="1997" name="J. Bacteriol.">
        <title>Putative channel components for the fast-rotating sodium-driven flagellar motor of a marine bacterium.</title>
        <authorList>
            <person name="Asai Y."/>
            <person name="Kojima S."/>
            <person name="Kato H."/>
            <person name="Nishioka N."/>
            <person name="Kawagishi I."/>
            <person name="Homma M."/>
        </authorList>
    </citation>
    <scope>NUCLEOTIDE SEQUENCE [GENOMIC DNA]</scope>
    <source>
        <strain>VI05</strain>
    </source>
</reference>
<accession>O06873</accession>